<feature type="chain" id="PRO_1000140119" description="3-keto-L-gulonate-6-phosphate decarboxylase UlaD">
    <location>
        <begin position="1"/>
        <end position="216"/>
    </location>
</feature>
<feature type="binding site" evidence="1">
    <location>
        <position position="11"/>
    </location>
    <ligand>
        <name>substrate</name>
    </ligand>
</feature>
<feature type="binding site" evidence="1">
    <location>
        <position position="33"/>
    </location>
    <ligand>
        <name>Mg(2+)</name>
        <dbReference type="ChEBI" id="CHEBI:18420"/>
    </ligand>
</feature>
<feature type="binding site" evidence="1">
    <location>
        <position position="62"/>
    </location>
    <ligand>
        <name>Mg(2+)</name>
        <dbReference type="ChEBI" id="CHEBI:18420"/>
    </ligand>
</feature>
<feature type="binding site" evidence="1">
    <location>
        <position position="192"/>
    </location>
    <ligand>
        <name>substrate</name>
    </ligand>
</feature>
<feature type="site" description="Transition state stabilizer" evidence="1">
    <location>
        <position position="64"/>
    </location>
</feature>
<feature type="site" description="Transition state stabilizer" evidence="1">
    <location>
        <position position="67"/>
    </location>
</feature>
<organism>
    <name type="scientific">Salmonella dublin (strain CT_02021853)</name>
    <dbReference type="NCBI Taxonomy" id="439851"/>
    <lineage>
        <taxon>Bacteria</taxon>
        <taxon>Pseudomonadati</taxon>
        <taxon>Pseudomonadota</taxon>
        <taxon>Gammaproteobacteria</taxon>
        <taxon>Enterobacterales</taxon>
        <taxon>Enterobacteriaceae</taxon>
        <taxon>Salmonella</taxon>
    </lineage>
</organism>
<evidence type="ECO:0000255" key="1">
    <source>
        <dbReference type="HAMAP-Rule" id="MF_01267"/>
    </source>
</evidence>
<protein>
    <recommendedName>
        <fullName evidence="1">3-keto-L-gulonate-6-phosphate decarboxylase UlaD</fullName>
        <ecNumber evidence="1">4.1.1.85</ecNumber>
    </recommendedName>
    <alternativeName>
        <fullName evidence="1">3-dehydro-L-gulonate-6-phosphate decarboxylase</fullName>
    </alternativeName>
    <alternativeName>
        <fullName evidence="1">KGPDC</fullName>
    </alternativeName>
    <alternativeName>
        <fullName evidence="1">L-ascorbate utilization protein D</fullName>
    </alternativeName>
</protein>
<sequence>MSLPMLQVALDNQTMDSAYETTRLIAEEVDIIEVGTILCVGEGVRAVRDLKALYPHKIVLADAKIADAGKILSRMCFEANADWVTVICCADINTAKGALDVAKEFNGDVQIELTGYWTWEQAQQWRDAGIQQVVYHRSRDAQAAGVAWGEADITAIKRLSDMGFKVTVTGGLALEDLPLFKGIPIHVFIAGRSIRDAESPVEAARQFKRSIAQLWG</sequence>
<comment type="function">
    <text evidence="1">Catalyzes the decarboxylation of 3-keto-L-gulonate-6-P into L-xylulose-5-P. Is involved in the anaerobic L-ascorbate utilization.</text>
</comment>
<comment type="catalytic activity">
    <reaction evidence="1">
        <text>3-dehydro-L-gulonate 6-phosphate + H(+) = L-xylulose 5-phosphate + CO2</text>
        <dbReference type="Rhea" id="RHEA:14353"/>
        <dbReference type="ChEBI" id="CHEBI:15378"/>
        <dbReference type="ChEBI" id="CHEBI:16526"/>
        <dbReference type="ChEBI" id="CHEBI:57829"/>
        <dbReference type="ChEBI" id="CHEBI:58774"/>
        <dbReference type="EC" id="4.1.1.85"/>
    </reaction>
</comment>
<comment type="cofactor">
    <cofactor evidence="1">
        <name>Mg(2+)</name>
        <dbReference type="ChEBI" id="CHEBI:18420"/>
    </cofactor>
    <text evidence="1">Binds 1 Mg(2+) ion per subunit.</text>
</comment>
<comment type="pathway">
    <text evidence="1">Cofactor degradation; L-ascorbate degradation; D-xylulose 5-phosphate from L-ascorbate: step 2/4.</text>
</comment>
<comment type="subunit">
    <text evidence="1">Homodimer.</text>
</comment>
<comment type="induction">
    <text evidence="1">Induced by L-ascorbate. Repressed by UlaR.</text>
</comment>
<comment type="similarity">
    <text evidence="1">Belongs to the HPS/KGPDC family. KGPDC subfamily.</text>
</comment>
<keyword id="KW-0119">Carbohydrate metabolism</keyword>
<keyword id="KW-0210">Decarboxylase</keyword>
<keyword id="KW-0456">Lyase</keyword>
<keyword id="KW-0460">Magnesium</keyword>
<keyword id="KW-0479">Metal-binding</keyword>
<accession>B5FS97</accession>
<reference key="1">
    <citation type="journal article" date="2011" name="J. Bacteriol.">
        <title>Comparative genomics of 28 Salmonella enterica isolates: evidence for CRISPR-mediated adaptive sublineage evolution.</title>
        <authorList>
            <person name="Fricke W.F."/>
            <person name="Mammel M.K."/>
            <person name="McDermott P.F."/>
            <person name="Tartera C."/>
            <person name="White D.G."/>
            <person name="Leclerc J.E."/>
            <person name="Ravel J."/>
            <person name="Cebula T.A."/>
        </authorList>
    </citation>
    <scope>NUCLEOTIDE SEQUENCE [LARGE SCALE GENOMIC DNA]</scope>
    <source>
        <strain>CT_02021853</strain>
    </source>
</reference>
<name>ULAD_SALDC</name>
<proteinExistence type="inferred from homology"/>
<dbReference type="EC" id="4.1.1.85" evidence="1"/>
<dbReference type="EMBL" id="CP001144">
    <property type="protein sequence ID" value="ACH77790.1"/>
    <property type="molecule type" value="Genomic_DNA"/>
</dbReference>
<dbReference type="RefSeq" id="WP_000056761.1">
    <property type="nucleotide sequence ID" value="NC_011205.1"/>
</dbReference>
<dbReference type="SMR" id="B5FS97"/>
<dbReference type="KEGG" id="sed:SeD_A4783"/>
<dbReference type="HOGENOM" id="CLU_081825_0_0_6"/>
<dbReference type="UniPathway" id="UPA00263">
    <property type="reaction ID" value="UER00378"/>
</dbReference>
<dbReference type="Proteomes" id="UP000008322">
    <property type="component" value="Chromosome"/>
</dbReference>
<dbReference type="GO" id="GO:0033982">
    <property type="term" value="F:3-dehydro-L-gulonate-6-phosphate decarboxylase activity"/>
    <property type="evidence" value="ECO:0007669"/>
    <property type="project" value="UniProtKB-EC"/>
</dbReference>
<dbReference type="GO" id="GO:0000287">
    <property type="term" value="F:magnesium ion binding"/>
    <property type="evidence" value="ECO:0007669"/>
    <property type="project" value="UniProtKB-UniRule"/>
</dbReference>
<dbReference type="GO" id="GO:0004590">
    <property type="term" value="F:orotidine-5'-phosphate decarboxylase activity"/>
    <property type="evidence" value="ECO:0007669"/>
    <property type="project" value="InterPro"/>
</dbReference>
<dbReference type="GO" id="GO:0006207">
    <property type="term" value="P:'de novo' pyrimidine nucleobase biosynthetic process"/>
    <property type="evidence" value="ECO:0007669"/>
    <property type="project" value="InterPro"/>
</dbReference>
<dbReference type="GO" id="GO:0019854">
    <property type="term" value="P:L-ascorbic acid catabolic process"/>
    <property type="evidence" value="ECO:0007669"/>
    <property type="project" value="UniProtKB-UniRule"/>
</dbReference>
<dbReference type="CDD" id="cd04726">
    <property type="entry name" value="KGPDC_HPS"/>
    <property type="match status" value="1"/>
</dbReference>
<dbReference type="FunFam" id="3.20.20.70:FF:000022">
    <property type="entry name" value="3-keto-L-gulonate-6-phosphate decarboxylase UlaD"/>
    <property type="match status" value="1"/>
</dbReference>
<dbReference type="Gene3D" id="3.20.20.70">
    <property type="entry name" value="Aldolase class I"/>
    <property type="match status" value="1"/>
</dbReference>
<dbReference type="HAMAP" id="MF_01267">
    <property type="entry name" value="UlaD"/>
    <property type="match status" value="1"/>
</dbReference>
<dbReference type="InterPro" id="IPR023942">
    <property type="entry name" value="3-keto-L-gulonate6Pdecase_UlaD"/>
</dbReference>
<dbReference type="InterPro" id="IPR013785">
    <property type="entry name" value="Aldolase_TIM"/>
</dbReference>
<dbReference type="InterPro" id="IPR041710">
    <property type="entry name" value="HPS/KGPDC"/>
</dbReference>
<dbReference type="InterPro" id="IPR001754">
    <property type="entry name" value="OMPdeCOase_dom"/>
</dbReference>
<dbReference type="InterPro" id="IPR011060">
    <property type="entry name" value="RibuloseP-bd_barrel"/>
</dbReference>
<dbReference type="NCBIfam" id="NF009832">
    <property type="entry name" value="PRK13306.1"/>
    <property type="match status" value="1"/>
</dbReference>
<dbReference type="PANTHER" id="PTHR35039">
    <property type="entry name" value="3-KETO-L-GULONATE-6-PHOSPHATE DECARBOXYLASE SGBH-RELATED"/>
    <property type="match status" value="1"/>
</dbReference>
<dbReference type="PANTHER" id="PTHR35039:SF3">
    <property type="entry name" value="3-KETO-L-GULONATE-6-PHOSPHATE DECARBOXYLASE SGBH-RELATED"/>
    <property type="match status" value="1"/>
</dbReference>
<dbReference type="Pfam" id="PF00215">
    <property type="entry name" value="OMPdecase"/>
    <property type="match status" value="1"/>
</dbReference>
<dbReference type="SMART" id="SM00934">
    <property type="entry name" value="OMPdecase"/>
    <property type="match status" value="1"/>
</dbReference>
<dbReference type="SUPFAM" id="SSF51366">
    <property type="entry name" value="Ribulose-phoshate binding barrel"/>
    <property type="match status" value="1"/>
</dbReference>
<gene>
    <name evidence="1" type="primary">ulaD</name>
    <name type="ordered locus">SeD_A4783</name>
</gene>